<feature type="chain" id="PRO_0000291159" description="UPF0434 protein YcaR">
    <location>
        <begin position="1"/>
        <end position="60"/>
    </location>
</feature>
<protein>
    <recommendedName>
        <fullName evidence="1">UPF0434 protein YcaR</fullName>
    </recommendedName>
</protein>
<proteinExistence type="inferred from homology"/>
<gene>
    <name evidence="1" type="primary">ycaR</name>
    <name type="ordered locus">SPA1811</name>
</gene>
<comment type="similarity">
    <text evidence="1">Belongs to the UPF0434 family.</text>
</comment>
<accession>Q5PGF4</accession>
<organism>
    <name type="scientific">Salmonella paratyphi A (strain ATCC 9150 / SARB42)</name>
    <dbReference type="NCBI Taxonomy" id="295319"/>
    <lineage>
        <taxon>Bacteria</taxon>
        <taxon>Pseudomonadati</taxon>
        <taxon>Pseudomonadota</taxon>
        <taxon>Gammaproteobacteria</taxon>
        <taxon>Enterobacterales</taxon>
        <taxon>Enterobacteriaceae</taxon>
        <taxon>Salmonella</taxon>
    </lineage>
</organism>
<reference key="1">
    <citation type="journal article" date="2004" name="Nat. Genet.">
        <title>Comparison of genome degradation in Paratyphi A and Typhi, human-restricted serovars of Salmonella enterica that cause typhoid.</title>
        <authorList>
            <person name="McClelland M."/>
            <person name="Sanderson K.E."/>
            <person name="Clifton S.W."/>
            <person name="Latreille P."/>
            <person name="Porwollik S."/>
            <person name="Sabo A."/>
            <person name="Meyer R."/>
            <person name="Bieri T."/>
            <person name="Ozersky P."/>
            <person name="McLellan M."/>
            <person name="Harkins C.R."/>
            <person name="Wang C."/>
            <person name="Nguyen C."/>
            <person name="Berghoff A."/>
            <person name="Elliott G."/>
            <person name="Kohlberg S."/>
            <person name="Strong C."/>
            <person name="Du F."/>
            <person name="Carter J."/>
            <person name="Kremizki C."/>
            <person name="Layman D."/>
            <person name="Leonard S."/>
            <person name="Sun H."/>
            <person name="Fulton L."/>
            <person name="Nash W."/>
            <person name="Miner T."/>
            <person name="Minx P."/>
            <person name="Delehaunty K."/>
            <person name="Fronick C."/>
            <person name="Magrini V."/>
            <person name="Nhan M."/>
            <person name="Warren W."/>
            <person name="Florea L."/>
            <person name="Spieth J."/>
            <person name="Wilson R.K."/>
        </authorList>
    </citation>
    <scope>NUCLEOTIDE SEQUENCE [LARGE SCALE GENOMIC DNA]</scope>
    <source>
        <strain>ATCC 9150 / SARB42</strain>
    </source>
</reference>
<evidence type="ECO:0000255" key="1">
    <source>
        <dbReference type="HAMAP-Rule" id="MF_01187"/>
    </source>
</evidence>
<dbReference type="EMBL" id="CP000026">
    <property type="protein sequence ID" value="AAV77727.1"/>
    <property type="molecule type" value="Genomic_DNA"/>
</dbReference>
<dbReference type="RefSeq" id="WP_000350061.1">
    <property type="nucleotide sequence ID" value="NC_006511.1"/>
</dbReference>
<dbReference type="SMR" id="Q5PGF4"/>
<dbReference type="KEGG" id="spt:SPA1811"/>
<dbReference type="HOGENOM" id="CLU_155659_3_1_6"/>
<dbReference type="Proteomes" id="UP000008185">
    <property type="component" value="Chromosome"/>
</dbReference>
<dbReference type="GO" id="GO:0005829">
    <property type="term" value="C:cytosol"/>
    <property type="evidence" value="ECO:0007669"/>
    <property type="project" value="TreeGrafter"/>
</dbReference>
<dbReference type="FunFam" id="2.20.25.10:FF:000002">
    <property type="entry name" value="UPF0434 protein YcaR"/>
    <property type="match status" value="1"/>
</dbReference>
<dbReference type="Gene3D" id="2.20.25.10">
    <property type="match status" value="1"/>
</dbReference>
<dbReference type="HAMAP" id="MF_01187">
    <property type="entry name" value="UPF0434"/>
    <property type="match status" value="1"/>
</dbReference>
<dbReference type="InterPro" id="IPR005651">
    <property type="entry name" value="Trm112-like"/>
</dbReference>
<dbReference type="NCBIfam" id="NF008806">
    <property type="entry name" value="PRK11827.1"/>
    <property type="match status" value="1"/>
</dbReference>
<dbReference type="PANTHER" id="PTHR33505:SF4">
    <property type="entry name" value="PROTEIN PREY, MITOCHONDRIAL"/>
    <property type="match status" value="1"/>
</dbReference>
<dbReference type="PANTHER" id="PTHR33505">
    <property type="entry name" value="ZGC:162634"/>
    <property type="match status" value="1"/>
</dbReference>
<dbReference type="Pfam" id="PF03966">
    <property type="entry name" value="Trm112p"/>
    <property type="match status" value="1"/>
</dbReference>
<dbReference type="SUPFAM" id="SSF158997">
    <property type="entry name" value="Trm112p-like"/>
    <property type="match status" value="1"/>
</dbReference>
<name>YCAR_SALPA</name>
<sequence>MDHRLLEIIACPVCNGKLWYNQEQQELICKLDNLAFPLRDGIPVLLENEARALTSDESKS</sequence>